<proteinExistence type="evidence at protein level"/>
<comment type="function">
    <text evidence="2 3">Modulates seed size by negatively regulating the cellularization of syncytial endosperm (PubMed:12692325, PubMed:20545893). May function by binding and modulating the activity of WRKY10 transcription factor (PubMed:20545893).</text>
</comment>
<comment type="subunit">
    <text evidence="3 4">Interacts with WRKY10 (PubMed:20545893). Interacts with MPK6 (PubMed:24750137).</text>
</comment>
<comment type="subcellular location">
    <subcellularLocation>
        <location evidence="3">Nucleus</location>
    </subcellularLocation>
    <text evidence="3">Expressed both in the unfused polar nuclei and in the fused polar nucleus in the central cell before fertilization, in the syncytial endosperm after fertilization and in the endosperm nuclei.</text>
</comment>
<comment type="alternative products">
    <event type="alternative splicing"/>
    <isoform>
        <id>O82170-1</id>
        <name>1</name>
        <sequence type="displayed"/>
    </isoform>
    <text evidence="8">A number of isoforms are produced. According to EST sequences.</text>
</comment>
<comment type="disruption phenotype">
    <text evidence="2">Reduced seed size and early endosperm cellularization.</text>
</comment>
<name>IKU1_ARATH</name>
<dbReference type="EMBL" id="AC004667">
    <property type="protein sequence ID" value="AAC61815.1"/>
    <property type="molecule type" value="Genomic_DNA"/>
</dbReference>
<dbReference type="EMBL" id="CP002685">
    <property type="protein sequence ID" value="AEC09083.1"/>
    <property type="molecule type" value="Genomic_DNA"/>
</dbReference>
<dbReference type="EMBL" id="CP002685">
    <property type="protein sequence ID" value="ANM62246.1"/>
    <property type="molecule type" value="Genomic_DNA"/>
</dbReference>
<dbReference type="EMBL" id="AK117327">
    <property type="protein sequence ID" value="BAC41998.1"/>
    <property type="molecule type" value="mRNA"/>
</dbReference>
<dbReference type="EMBL" id="BT009652">
    <property type="protein sequence ID" value="AAP75802.1"/>
    <property type="molecule type" value="mRNA"/>
</dbReference>
<dbReference type="PIR" id="A84766">
    <property type="entry name" value="A84766"/>
</dbReference>
<dbReference type="RefSeq" id="NP_001324419.1">
    <molecule id="O82170-1"/>
    <property type="nucleotide sequence ID" value="NM_001336551.1"/>
</dbReference>
<dbReference type="RefSeq" id="NP_181066.1">
    <molecule id="O82170-1"/>
    <property type="nucleotide sequence ID" value="NM_129075.4"/>
</dbReference>
<dbReference type="FunCoup" id="O82170">
    <property type="interactions" value="893"/>
</dbReference>
<dbReference type="STRING" id="3702.O82170"/>
<dbReference type="GlyGen" id="O82170">
    <property type="glycosylation" value="2 sites"/>
</dbReference>
<dbReference type="iPTMnet" id="O82170"/>
<dbReference type="PaxDb" id="3702-AT2G35230.1"/>
<dbReference type="ProteomicsDB" id="228837">
    <molecule id="O82170-1"/>
</dbReference>
<dbReference type="EnsemblPlants" id="AT2G35230.1">
    <molecule id="O82170-1"/>
    <property type="protein sequence ID" value="AT2G35230.1"/>
    <property type="gene ID" value="AT2G35230"/>
</dbReference>
<dbReference type="EnsemblPlants" id="AT2G35230.3">
    <molecule id="O82170-1"/>
    <property type="protein sequence ID" value="AT2G35230.3"/>
    <property type="gene ID" value="AT2G35230"/>
</dbReference>
<dbReference type="GeneID" id="818090"/>
<dbReference type="Gramene" id="AT2G35230.1">
    <molecule id="O82170-1"/>
    <property type="protein sequence ID" value="AT2G35230.1"/>
    <property type="gene ID" value="AT2G35230"/>
</dbReference>
<dbReference type="Gramene" id="AT2G35230.3">
    <molecule id="O82170-1"/>
    <property type="protein sequence ID" value="AT2G35230.3"/>
    <property type="gene ID" value="AT2G35230"/>
</dbReference>
<dbReference type="KEGG" id="ath:AT2G35230"/>
<dbReference type="Araport" id="AT2G35230"/>
<dbReference type="TAIR" id="AT2G35230">
    <property type="gene designation" value="IKU1"/>
</dbReference>
<dbReference type="eggNOG" id="ENOG502QSYF">
    <property type="taxonomic scope" value="Eukaryota"/>
</dbReference>
<dbReference type="HOGENOM" id="CLU_063567_1_0_1"/>
<dbReference type="InParanoid" id="O82170"/>
<dbReference type="OMA" id="MPPAQEH"/>
<dbReference type="PhylomeDB" id="O82170"/>
<dbReference type="PRO" id="PR:O82170"/>
<dbReference type="Proteomes" id="UP000006548">
    <property type="component" value="Chromosome 2"/>
</dbReference>
<dbReference type="ExpressionAtlas" id="O82170">
    <property type="expression patterns" value="baseline and differential"/>
</dbReference>
<dbReference type="GO" id="GO:0043078">
    <property type="term" value="C:polar nucleus"/>
    <property type="evidence" value="ECO:0000314"/>
    <property type="project" value="TAIR"/>
</dbReference>
<dbReference type="GO" id="GO:0009960">
    <property type="term" value="P:endosperm development"/>
    <property type="evidence" value="ECO:0000315"/>
    <property type="project" value="TAIR"/>
</dbReference>
<dbReference type="GO" id="GO:0080113">
    <property type="term" value="P:regulation of seed growth"/>
    <property type="evidence" value="ECO:0000315"/>
    <property type="project" value="TAIR"/>
</dbReference>
<dbReference type="InterPro" id="IPR008889">
    <property type="entry name" value="VQ"/>
</dbReference>
<dbReference type="InterPro" id="IPR039612">
    <property type="entry name" value="VQ_5/9/14"/>
</dbReference>
<dbReference type="PANTHER" id="PTHR33783">
    <property type="entry name" value="PROTEIN HAIKU1"/>
    <property type="match status" value="1"/>
</dbReference>
<dbReference type="PANTHER" id="PTHR33783:SF1">
    <property type="entry name" value="PROTEIN HAIKU1"/>
    <property type="match status" value="1"/>
</dbReference>
<dbReference type="Pfam" id="PF05678">
    <property type="entry name" value="VQ"/>
    <property type="match status" value="1"/>
</dbReference>
<feature type="chain" id="PRO_0000432304" description="Protein HAIKU1">
    <location>
        <begin position="1"/>
        <end position="402"/>
    </location>
</feature>
<feature type="region of interest" description="Disordered" evidence="1">
    <location>
        <begin position="1"/>
        <end position="44"/>
    </location>
</feature>
<feature type="region of interest" description="Disordered" evidence="1">
    <location>
        <begin position="63"/>
        <end position="135"/>
    </location>
</feature>
<feature type="region of interest" description="Disordered" evidence="1">
    <location>
        <begin position="160"/>
        <end position="266"/>
    </location>
</feature>
<feature type="region of interest" description="Disordered" evidence="1">
    <location>
        <begin position="346"/>
        <end position="402"/>
    </location>
</feature>
<feature type="short sequence motif" description="VQ" evidence="8">
    <location>
        <begin position="55"/>
        <end position="64"/>
    </location>
</feature>
<feature type="compositionally biased region" description="Polar residues" evidence="1">
    <location>
        <begin position="24"/>
        <end position="44"/>
    </location>
</feature>
<feature type="compositionally biased region" description="Polar residues" evidence="1">
    <location>
        <begin position="76"/>
        <end position="87"/>
    </location>
</feature>
<feature type="compositionally biased region" description="Pro residues" evidence="1">
    <location>
        <begin position="103"/>
        <end position="113"/>
    </location>
</feature>
<feature type="compositionally biased region" description="Polar residues" evidence="1">
    <location>
        <begin position="160"/>
        <end position="173"/>
    </location>
</feature>
<feature type="compositionally biased region" description="Low complexity" evidence="1">
    <location>
        <begin position="218"/>
        <end position="240"/>
    </location>
</feature>
<feature type="compositionally biased region" description="Pro residues" evidence="1">
    <location>
        <begin position="257"/>
        <end position="266"/>
    </location>
</feature>
<feature type="compositionally biased region" description="Polar residues" evidence="1">
    <location>
        <begin position="349"/>
        <end position="358"/>
    </location>
</feature>
<feature type="compositionally biased region" description="Pro residues" evidence="1">
    <location>
        <begin position="371"/>
        <end position="380"/>
    </location>
</feature>
<feature type="compositionally biased region" description="Low complexity" evidence="1">
    <location>
        <begin position="381"/>
        <end position="390"/>
    </location>
</feature>
<feature type="mutagenesis site" description="Loss of function." evidence="3">
    <original>IVQQ</original>
    <variation>EDLE</variation>
    <location>
        <begin position="58"/>
        <end position="61"/>
    </location>
</feature>
<keyword id="KW-0025">Alternative splicing</keyword>
<keyword id="KW-0539">Nucleus</keyword>
<keyword id="KW-1185">Reference proteome</keyword>
<keyword id="KW-0346">Stress response</keyword>
<protein>
    <recommendedName>
        <fullName evidence="8">Protein HAIKU1</fullName>
    </recommendedName>
    <alternativeName>
        <fullName evidence="7">MPK3/6-targeted VQ-motif-containing protein 9</fullName>
    </alternativeName>
    <alternativeName>
        <fullName evidence="6">VQ motif-containing protein 14</fullName>
        <shortName evidence="6">AtVQ14</shortName>
    </alternativeName>
</protein>
<accession>O82170</accession>
<sequence>MDRPRQNDHLGVNRIGKNIRKSPLHQSTFAASTSNGAAPRLQTQPQVYNISKNDFRSIVQQLTGSPSRESLPRPPQNNSLRPQNTRLQRIRPSPLTQLNRPAVPLPSMAPPQSHPQFARQPPHQPPFPQTTQQPMMGHRDQFWSNTAESPVSEYMRYLQSSLGDSGPNANQMQPGHEQRPYIPGHEQRPYVPGNEQQPYMPGNEQRPYIPGHEQRSYMPAQSQSQSQPQPQPQPQQHMMPGPQPRMNMQGPLQPNQYLPPPGLVPSPVPHNLPSPRFNAPVPVTPTQPSPMFSQMYGGFPSPRYNGFGPLQSPTSQFLQPSPTGYPNMFSPRSPYPLLSPGVQYPQPLTPNFSFSQIAQQGSLGPGAGPSQGPPQPPPSPGLMFPLSPSGFFPMPSPRWNDY</sequence>
<evidence type="ECO:0000256" key="1">
    <source>
        <dbReference type="SAM" id="MobiDB-lite"/>
    </source>
</evidence>
<evidence type="ECO:0000269" key="2">
    <source>
    </source>
</evidence>
<evidence type="ECO:0000269" key="3">
    <source>
    </source>
</evidence>
<evidence type="ECO:0000269" key="4">
    <source>
    </source>
</evidence>
<evidence type="ECO:0000303" key="5">
    <source>
    </source>
</evidence>
<evidence type="ECO:0000303" key="6">
    <source>
    </source>
</evidence>
<evidence type="ECO:0000303" key="7">
    <source>
    </source>
</evidence>
<evidence type="ECO:0000305" key="8"/>
<evidence type="ECO:0000312" key="9">
    <source>
        <dbReference type="Araport" id="AT2G35230"/>
    </source>
</evidence>
<organism>
    <name type="scientific">Arabidopsis thaliana</name>
    <name type="common">Mouse-ear cress</name>
    <dbReference type="NCBI Taxonomy" id="3702"/>
    <lineage>
        <taxon>Eukaryota</taxon>
        <taxon>Viridiplantae</taxon>
        <taxon>Streptophyta</taxon>
        <taxon>Embryophyta</taxon>
        <taxon>Tracheophyta</taxon>
        <taxon>Spermatophyta</taxon>
        <taxon>Magnoliopsida</taxon>
        <taxon>eudicotyledons</taxon>
        <taxon>Gunneridae</taxon>
        <taxon>Pentapetalae</taxon>
        <taxon>rosids</taxon>
        <taxon>malvids</taxon>
        <taxon>Brassicales</taxon>
        <taxon>Brassicaceae</taxon>
        <taxon>Camelineae</taxon>
        <taxon>Arabidopsis</taxon>
    </lineage>
</organism>
<gene>
    <name evidence="5" type="primary">IKU1</name>
    <name evidence="7" type="synonym">MVQ9</name>
    <name evidence="6" type="synonym">VQ14</name>
    <name evidence="9" type="ordered locus">At2g35230</name>
</gene>
<reference key="1">
    <citation type="journal article" date="1999" name="Nature">
        <title>Sequence and analysis of chromosome 2 of the plant Arabidopsis thaliana.</title>
        <authorList>
            <person name="Lin X."/>
            <person name="Kaul S."/>
            <person name="Rounsley S.D."/>
            <person name="Shea T.P."/>
            <person name="Benito M.-I."/>
            <person name="Town C.D."/>
            <person name="Fujii C.Y."/>
            <person name="Mason T.M."/>
            <person name="Bowman C.L."/>
            <person name="Barnstead M.E."/>
            <person name="Feldblyum T.V."/>
            <person name="Buell C.R."/>
            <person name="Ketchum K.A."/>
            <person name="Lee J.J."/>
            <person name="Ronning C.M."/>
            <person name="Koo H.L."/>
            <person name="Moffat K.S."/>
            <person name="Cronin L.A."/>
            <person name="Shen M."/>
            <person name="Pai G."/>
            <person name="Van Aken S."/>
            <person name="Umayam L."/>
            <person name="Tallon L.J."/>
            <person name="Gill J.E."/>
            <person name="Adams M.D."/>
            <person name="Carrera A.J."/>
            <person name="Creasy T.H."/>
            <person name="Goodman H.M."/>
            <person name="Somerville C.R."/>
            <person name="Copenhaver G.P."/>
            <person name="Preuss D."/>
            <person name="Nierman W.C."/>
            <person name="White O."/>
            <person name="Eisen J.A."/>
            <person name="Salzberg S.L."/>
            <person name="Fraser C.M."/>
            <person name="Venter J.C."/>
        </authorList>
    </citation>
    <scope>NUCLEOTIDE SEQUENCE [LARGE SCALE GENOMIC DNA]</scope>
    <source>
        <strain>cv. Columbia</strain>
    </source>
</reference>
<reference key="2">
    <citation type="journal article" date="2017" name="Plant J.">
        <title>Araport11: a complete reannotation of the Arabidopsis thaliana reference genome.</title>
        <authorList>
            <person name="Cheng C.Y."/>
            <person name="Krishnakumar V."/>
            <person name="Chan A.P."/>
            <person name="Thibaud-Nissen F."/>
            <person name="Schobel S."/>
            <person name="Town C.D."/>
        </authorList>
    </citation>
    <scope>GENOME REANNOTATION</scope>
    <source>
        <strain>cv. Columbia</strain>
    </source>
</reference>
<reference key="3">
    <citation type="journal article" date="2002" name="Science">
        <title>Functional annotation of a full-length Arabidopsis cDNA collection.</title>
        <authorList>
            <person name="Seki M."/>
            <person name="Narusaka M."/>
            <person name="Kamiya A."/>
            <person name="Ishida J."/>
            <person name="Satou M."/>
            <person name="Sakurai T."/>
            <person name="Nakajima M."/>
            <person name="Enju A."/>
            <person name="Akiyama K."/>
            <person name="Oono Y."/>
            <person name="Muramatsu M."/>
            <person name="Hayashizaki Y."/>
            <person name="Kawai J."/>
            <person name="Carninci P."/>
            <person name="Itoh M."/>
            <person name="Ishii Y."/>
            <person name="Arakawa T."/>
            <person name="Shibata K."/>
            <person name="Shinagawa A."/>
            <person name="Shinozaki K."/>
        </authorList>
    </citation>
    <scope>NUCLEOTIDE SEQUENCE [LARGE SCALE MRNA]</scope>
    <source>
        <strain>cv. Columbia</strain>
    </source>
</reference>
<reference key="4">
    <citation type="journal article" date="2003" name="Science">
        <title>Empirical analysis of transcriptional activity in the Arabidopsis genome.</title>
        <authorList>
            <person name="Yamada K."/>
            <person name="Lim J."/>
            <person name="Dale J.M."/>
            <person name="Chen H."/>
            <person name="Shinn P."/>
            <person name="Palm C.J."/>
            <person name="Southwick A.M."/>
            <person name="Wu H.C."/>
            <person name="Kim C.J."/>
            <person name="Nguyen M."/>
            <person name="Pham P.K."/>
            <person name="Cheuk R.F."/>
            <person name="Karlin-Newmann G."/>
            <person name="Liu S.X."/>
            <person name="Lam B."/>
            <person name="Sakano H."/>
            <person name="Wu T."/>
            <person name="Yu G."/>
            <person name="Miranda M."/>
            <person name="Quach H.L."/>
            <person name="Tripp M."/>
            <person name="Chang C.H."/>
            <person name="Lee J.M."/>
            <person name="Toriumi M.J."/>
            <person name="Chan M.M."/>
            <person name="Tang C.C."/>
            <person name="Onodera C.S."/>
            <person name="Deng J.M."/>
            <person name="Akiyama K."/>
            <person name="Ansari Y."/>
            <person name="Arakawa T."/>
            <person name="Banh J."/>
            <person name="Banno F."/>
            <person name="Bowser L."/>
            <person name="Brooks S.Y."/>
            <person name="Carninci P."/>
            <person name="Chao Q."/>
            <person name="Choy N."/>
            <person name="Enju A."/>
            <person name="Goldsmith A.D."/>
            <person name="Gurjal M."/>
            <person name="Hansen N.F."/>
            <person name="Hayashizaki Y."/>
            <person name="Johnson-Hopson C."/>
            <person name="Hsuan V.W."/>
            <person name="Iida K."/>
            <person name="Karnes M."/>
            <person name="Khan S."/>
            <person name="Koesema E."/>
            <person name="Ishida J."/>
            <person name="Jiang P.X."/>
            <person name="Jones T."/>
            <person name="Kawai J."/>
            <person name="Kamiya A."/>
            <person name="Meyers C."/>
            <person name="Nakajima M."/>
            <person name="Narusaka M."/>
            <person name="Seki M."/>
            <person name="Sakurai T."/>
            <person name="Satou M."/>
            <person name="Tamse R."/>
            <person name="Vaysberg M."/>
            <person name="Wallender E.K."/>
            <person name="Wong C."/>
            <person name="Yamamura Y."/>
            <person name="Yuan S."/>
            <person name="Shinozaki K."/>
            <person name="Davis R.W."/>
            <person name="Theologis A."/>
            <person name="Ecker J.R."/>
        </authorList>
    </citation>
    <scope>NUCLEOTIDE SEQUENCE [LARGE SCALE MRNA]</scope>
    <source>
        <strain>cv. Columbia</strain>
    </source>
</reference>
<reference key="5">
    <citation type="journal article" date="2003" name="Plant Physiol.">
        <title>Arabidopsis haiku mutants reveal new controls of seed size by endosperm.</title>
        <authorList>
            <person name="Garcia D."/>
            <person name="Saingery V."/>
            <person name="Chambrier P."/>
            <person name="Mayer U."/>
            <person name="Juergens G."/>
            <person name="Berger F."/>
        </authorList>
    </citation>
    <scope>FUNCTION</scope>
    <scope>DISRUPTION PHENOTYPE</scope>
</reference>
<reference key="6">
    <citation type="journal article" date="2009" name="Plant Physiol.">
        <title>Large-scale Arabidopsis phosphoproteome profiling reveals novel chloroplast kinase substrates and phosphorylation networks.</title>
        <authorList>
            <person name="Reiland S."/>
            <person name="Messerli G."/>
            <person name="Baerenfaller K."/>
            <person name="Gerrits B."/>
            <person name="Endler A."/>
            <person name="Grossmann J."/>
            <person name="Gruissem W."/>
            <person name="Baginsky S."/>
        </authorList>
    </citation>
    <scope>IDENTIFICATION BY MASS SPECTROMETRY [LARGE SCALE ANALYSIS]</scope>
</reference>
<reference key="7">
    <citation type="journal article" date="2010" name="Plant J.">
        <title>The VQ motif protein IKU1 regulates endosperm growth and seed size in Arabidopsis.</title>
        <authorList>
            <person name="Wang A."/>
            <person name="Garcia D."/>
            <person name="Zhang H."/>
            <person name="Feng K."/>
            <person name="Chaudhury A."/>
            <person name="Berger F."/>
            <person name="Peacock W.J."/>
            <person name="Dennis E.S."/>
            <person name="Luo M."/>
        </authorList>
    </citation>
    <scope>FUNCTION</scope>
    <scope>INTERACTION WITH WRKY10</scope>
    <scope>SUBCELLULAR LOCATION</scope>
    <scope>MUTAGENESIS OF 58-ILE--GLN-61</scope>
</reference>
<reference key="8">
    <citation type="journal article" date="2012" name="Plant Physiol.">
        <title>Structural and functional analysis of VQ motif-containing proteins in Arabidopsis as interacting proteins of WRKY transcription factors.</title>
        <authorList>
            <person name="Cheng Y."/>
            <person name="Zhou Y."/>
            <person name="Yang Y."/>
            <person name="Chi Y.J."/>
            <person name="Zhou J."/>
            <person name="Chen J.Y."/>
            <person name="Wang F."/>
            <person name="Fan B."/>
            <person name="Shi K."/>
            <person name="Zhou Y.H."/>
            <person name="Yu J.Q."/>
            <person name="Chen Z."/>
        </authorList>
    </citation>
    <scope>GENE FAMILY</scope>
    <scope>NOMENCLATURE</scope>
</reference>
<reference key="9">
    <citation type="journal article" date="2014" name="New Phytol.">
        <title>The Arabidopsis thaliana mitogen-activated protein kinases MPK3 and MPK6 target a subclass of 'VQ-motif'-containing proteins to regulate immune responses.</title>
        <authorList>
            <person name="Pecher P."/>
            <person name="Eschen-Lippold L."/>
            <person name="Herklotz S."/>
            <person name="Kuhle K."/>
            <person name="Naumann K."/>
            <person name="Bethke G."/>
            <person name="Uhrig J."/>
            <person name="Weyhe M."/>
            <person name="Scheel D."/>
            <person name="Lee J."/>
        </authorList>
    </citation>
    <scope>INTERACTION WITH MPK6</scope>
</reference>